<keyword id="KW-0002">3D-structure</keyword>
<keyword id="KW-1064">Adaptive immunity</keyword>
<keyword id="KW-1003">Cell membrane</keyword>
<keyword id="KW-0903">Direct protein sequencing</keyword>
<keyword id="KW-1015">Disulfide bond</keyword>
<keyword id="KW-0391">Immunity</keyword>
<keyword id="KW-1280">Immunoglobulin</keyword>
<keyword id="KW-0393">Immunoglobulin domain</keyword>
<keyword id="KW-0472">Membrane</keyword>
<keyword id="KW-1267">Proteomics identification</keyword>
<keyword id="KW-1185">Reference proteome</keyword>
<keyword id="KW-0964">Secreted</keyword>
<keyword id="KW-0732">Signal</keyword>
<accession>P01780</accession>
<accession>A0A0B4J1U8</accession>
<accession>P01781</accession>
<accession>P80419</accession>
<proteinExistence type="evidence at protein level"/>
<reference key="1">
    <citation type="journal article" date="2003" name="Nature">
        <title>The DNA sequence and analysis of human chromosome 14.</title>
        <authorList>
            <person name="Heilig R."/>
            <person name="Eckenberg R."/>
            <person name="Petit J.-L."/>
            <person name="Fonknechten N."/>
            <person name="Da Silva C."/>
            <person name="Cattolico L."/>
            <person name="Levy M."/>
            <person name="Barbe V."/>
            <person name="De Berardinis V."/>
            <person name="Ureta-Vidal A."/>
            <person name="Pelletier E."/>
            <person name="Vico V."/>
            <person name="Anthouard V."/>
            <person name="Rowen L."/>
            <person name="Madan A."/>
            <person name="Qin S."/>
            <person name="Sun H."/>
            <person name="Du H."/>
            <person name="Pepin K."/>
            <person name="Artiguenave F."/>
            <person name="Robert C."/>
            <person name="Cruaud C."/>
            <person name="Bruels T."/>
            <person name="Jaillon O."/>
            <person name="Friedlander L."/>
            <person name="Samson G."/>
            <person name="Brottier P."/>
            <person name="Cure S."/>
            <person name="Segurens B."/>
            <person name="Aniere F."/>
            <person name="Samain S."/>
            <person name="Crespeau H."/>
            <person name="Abbasi N."/>
            <person name="Aiach N."/>
            <person name="Boscus D."/>
            <person name="Dickhoff R."/>
            <person name="Dors M."/>
            <person name="Dubois I."/>
            <person name="Friedman C."/>
            <person name="Gouyvenoux M."/>
            <person name="James R."/>
            <person name="Madan A."/>
            <person name="Mairey-Estrada B."/>
            <person name="Mangenot S."/>
            <person name="Martins N."/>
            <person name="Menard M."/>
            <person name="Oztas S."/>
            <person name="Ratcliffe A."/>
            <person name="Shaffer T."/>
            <person name="Trask B."/>
            <person name="Vacherie B."/>
            <person name="Bellemere C."/>
            <person name="Belser C."/>
            <person name="Besnard-Gonnet M."/>
            <person name="Bartol-Mavel D."/>
            <person name="Boutard M."/>
            <person name="Briez-Silla S."/>
            <person name="Combette S."/>
            <person name="Dufosse-Laurent V."/>
            <person name="Ferron C."/>
            <person name="Lechaplais C."/>
            <person name="Louesse C."/>
            <person name="Muselet D."/>
            <person name="Magdelenat G."/>
            <person name="Pateau E."/>
            <person name="Petit E."/>
            <person name="Sirvain-Trukniewicz P."/>
            <person name="Trybou A."/>
            <person name="Vega-Czarny N."/>
            <person name="Bataille E."/>
            <person name="Bluet E."/>
            <person name="Bordelais I."/>
            <person name="Dubois M."/>
            <person name="Dumont C."/>
            <person name="Guerin T."/>
            <person name="Haffray S."/>
            <person name="Hammadi R."/>
            <person name="Muanga J."/>
            <person name="Pellouin V."/>
            <person name="Robert D."/>
            <person name="Wunderle E."/>
            <person name="Gauguet G."/>
            <person name="Roy A."/>
            <person name="Sainte-Marthe L."/>
            <person name="Verdier J."/>
            <person name="Verdier-Discala C."/>
            <person name="Hillier L.W."/>
            <person name="Fulton L."/>
            <person name="McPherson J."/>
            <person name="Matsuda F."/>
            <person name="Wilson R."/>
            <person name="Scarpelli C."/>
            <person name="Gyapay G."/>
            <person name="Wincker P."/>
            <person name="Saurin W."/>
            <person name="Quetier F."/>
            <person name="Waterston R."/>
            <person name="Hood L."/>
            <person name="Weissenbach J."/>
        </authorList>
    </citation>
    <scope>NUCLEOTIDE SEQUENCE [LARGE SCALE GENOMIC DNA] (IMGT ALLELE IGHV3-7*03)</scope>
</reference>
<reference key="2">
    <citation type="journal article" date="1973" name="Hoppe-Seyler's Z. Physiol. Chem.">
        <title>The primary structure of a monoclonal IgM-immunoglobulin (macroglobulin Gal.), II: the amino acid sequence of the H-chain (mu-type), subgroup H III. Architecture of the complete IgM-molecule.</title>
        <authorList>
            <person name="Watanabe S."/>
            <person name="Barnikol H.U."/>
            <person name="Horn J."/>
            <person name="Bertram J."/>
            <person name="Hilschmann N."/>
        </authorList>
    </citation>
    <scope>PROTEIN SEQUENCE OF 20-117</scope>
</reference>
<reference key="3">
    <citation type="submission" date="1975-06" db="PIR data bank">
        <authorList>
            <person name="Hilschmann N."/>
        </authorList>
    </citation>
    <scope>SEQUENCE REVISION TO 47-52</scope>
</reference>
<reference key="4">
    <citation type="journal article" date="1974" name="Proc. Natl. Acad. Sci. U.S.A.">
        <title>Variable region sequences of five human immunoglobulin heavy chains of the VH3 subgroup: definitive identification of four heavy chain hypervariable regions.</title>
        <authorList>
            <person name="Capra J.D."/>
            <person name="Kehoe J.M."/>
        </authorList>
    </citation>
    <scope>PROTEIN SEQUENCE OF 20-117</scope>
</reference>
<reference key="5">
    <citation type="journal article" date="1995" name="Eur. J. Biochem.">
        <title>Characterization of the two unique human anti-flavin monoclonal immunoglobulins.</title>
        <authorList>
            <person name="Stoppini M."/>
            <person name="Bellotti V."/>
            <person name="Negri A."/>
            <person name="Merlini G."/>
            <person name="Garver F."/>
            <person name="Ferri G."/>
        </authorList>
    </citation>
    <scope>PROTEIN SEQUENCE OF 20-117</scope>
</reference>
<reference key="6">
    <citation type="journal article" date="2001" name="Exp. Clin. Immunogenet.">
        <title>Nomenclature of the human immunoglobulin heavy (IGH) genes.</title>
        <authorList>
            <person name="Lefranc M.P."/>
        </authorList>
    </citation>
    <scope>NOMENCLATURE</scope>
</reference>
<reference key="7">
    <citation type="book" date="2001" name="The Immunoglobulin FactsBook.">
        <title>The Immunoglobulin FactsBook.</title>
        <editorList>
            <person name="Lefranc M.P."/>
            <person name="Lefranc G."/>
        </editorList>
        <authorList>
            <person name="Lefranc M.P."/>
            <person name="Lefranc G."/>
        </authorList>
    </citation>
    <scope>NOMENCLATURE</scope>
</reference>
<reference key="8">
    <citation type="journal article" date="2007" name="Annu. Rev. Genet.">
        <title>Immunoglobulin somatic hypermutation.</title>
        <authorList>
            <person name="Teng G."/>
            <person name="Papavasiliou F.N."/>
        </authorList>
    </citation>
    <scope>REVIEW ON SOMATIC HYPERMUTATION</scope>
</reference>
<reference key="9">
    <citation type="journal article" date="2010" name="J. Allergy Clin. Immunol.">
        <title>Structure and function of immunoglobulins.</title>
        <authorList>
            <person name="Schroeder H.W. Jr."/>
            <person name="Cavacini L."/>
        </authorList>
    </citation>
    <scope>REVIEW ON IMMUNOGLOBULINS</scope>
</reference>
<reference key="10">
    <citation type="journal article" date="2012" name="Nat. Rev. Immunol.">
        <title>Molecular programming of B cell memory.</title>
        <authorList>
            <person name="McHeyzer-Williams M."/>
            <person name="Okitsu S."/>
            <person name="Wang N."/>
            <person name="McHeyzer-Williams L."/>
        </authorList>
    </citation>
    <scope>REVIEW ON FUNCTION</scope>
</reference>
<reference key="11">
    <citation type="journal article" date="2014" name="Front. Immunol.">
        <title>Immunoglobulin and T Cell Receptor Genes: IMGT((R)) and the Birth and Rise of Immunoinformatics.</title>
        <authorList>
            <person name="Lefranc M.P."/>
        </authorList>
    </citation>
    <scope>NOMENCLATURE</scope>
</reference>
<organism>
    <name type="scientific">Homo sapiens</name>
    <name type="common">Human</name>
    <dbReference type="NCBI Taxonomy" id="9606"/>
    <lineage>
        <taxon>Eukaryota</taxon>
        <taxon>Metazoa</taxon>
        <taxon>Chordata</taxon>
        <taxon>Craniata</taxon>
        <taxon>Vertebrata</taxon>
        <taxon>Euteleostomi</taxon>
        <taxon>Mammalia</taxon>
        <taxon>Eutheria</taxon>
        <taxon>Euarchontoglires</taxon>
        <taxon>Primates</taxon>
        <taxon>Haplorrhini</taxon>
        <taxon>Catarrhini</taxon>
        <taxon>Hominidae</taxon>
        <taxon>Homo</taxon>
    </lineage>
</organism>
<feature type="signal peptide" evidence="3 4 5">
    <location>
        <begin position="1"/>
        <end position="19"/>
    </location>
</feature>
<feature type="chain" id="PRO_0000059931" description="Immunoglobulin heavy variable 3-7" evidence="3 4 5">
    <location>
        <begin position="20"/>
        <end position="117"/>
    </location>
</feature>
<feature type="domain" description="Ig-like" evidence="2">
    <location>
        <begin position="20"/>
        <end position="117" status="greater than"/>
    </location>
</feature>
<feature type="region of interest" description="Framework-1" evidence="1">
    <location>
        <begin position="20"/>
        <end position="44"/>
    </location>
</feature>
<feature type="region of interest" description="Complementarity-determining-1" evidence="1">
    <location>
        <begin position="45"/>
        <end position="52"/>
    </location>
</feature>
<feature type="region of interest" description="Framework-2" evidence="1">
    <location>
        <begin position="53"/>
        <end position="69"/>
    </location>
</feature>
<feature type="region of interest" description="Complementarity-determining-2" evidence="1">
    <location>
        <begin position="70"/>
        <end position="77"/>
    </location>
</feature>
<feature type="region of interest" description="Framework-3" evidence="1">
    <location>
        <begin position="78"/>
        <end position="115"/>
    </location>
</feature>
<feature type="region of interest" description="Complementarity-determining-3" evidence="1">
    <location>
        <begin position="116"/>
        <end position="117" status="greater than"/>
    </location>
</feature>
<feature type="disulfide bond" evidence="2">
    <location>
        <begin position="41"/>
        <end position="115"/>
    </location>
</feature>
<feature type="sequence conflict" description="In Ref. 4; AA sequence." evidence="12" ref="4">
    <original>E</original>
    <variation>D</variation>
    <location>
        <position position="20"/>
    </location>
</feature>
<feature type="sequence conflict" description="In Ref. 2; AA sequence." evidence="12" ref="2">
    <original>G</original>
    <variation>D</variation>
    <location>
        <position position="29"/>
    </location>
</feature>
<feature type="sequence conflict" description="In Ref. 4; AA sequence." evidence="12" ref="4">
    <original>Q</original>
    <variation>K</variation>
    <location>
        <position position="32"/>
    </location>
</feature>
<feature type="sequence conflict" description="In Ref. 5; AA sequence." evidence="12" ref="5">
    <original>G</original>
    <variation>E</variation>
    <location>
        <position position="35"/>
    </location>
</feature>
<feature type="sequence conflict" description="In Ref. 2; AA sequence." evidence="12" ref="2">
    <original>G</original>
    <variation>R</variation>
    <location>
        <position position="35"/>
    </location>
</feature>
<feature type="sequence conflict" description="In Ref. 5; AA sequence." evidence="12" ref="5">
    <original>R</original>
    <variation>K</variation>
    <location>
        <position position="38"/>
    </location>
</feature>
<feature type="sequence conflict" description="In Ref. 5; AA sequence." evidence="12" ref="5">
    <original>A</original>
    <variation>T</variation>
    <location>
        <position position="42"/>
    </location>
</feature>
<feature type="sequence conflict" description="In Ref. 2; AA sequence." evidence="12" ref="2">
    <original>TFSSYWMS</original>
    <variation>BFBBLGMT</variation>
    <location>
        <begin position="47"/>
        <end position="54"/>
    </location>
</feature>
<feature type="sequence conflict" description="In Ref. 5; AA sequence." evidence="12" ref="5">
    <original>TFSSYWMS</original>
    <variation>SYSNYVMT</variation>
    <location>
        <begin position="47"/>
        <end position="54"/>
    </location>
</feature>
<feature type="sequence conflict" description="In Ref. 4; AA sequence." evidence="12" ref="4">
    <original>SY</original>
    <variation>TA</variation>
    <location>
        <begin position="50"/>
        <end position="51"/>
    </location>
</feature>
<feature type="sequence conflict" description="In Ref. 4; AA sequence." evidence="12" ref="4">
    <original>S</original>
    <variation>K</variation>
    <location>
        <position position="54"/>
    </location>
</feature>
<feature type="sequence conflict" description="In Ref. 4; AA sequence." evidence="12" ref="4">
    <original>ANIKQDGS</original>
    <variation>VWRVEQVV</variation>
    <location>
        <begin position="68"/>
        <end position="75"/>
    </location>
</feature>
<feature type="sequence conflict" description="In Ref. 5; AA sequence." evidence="12" ref="5">
    <original>A</original>
    <variation>T</variation>
    <location>
        <position position="68"/>
    </location>
</feature>
<feature type="sequence conflict" description="In Ref. 5; AA sequence." evidence="12" ref="5">
    <original>KQDGS</original>
    <variation>RPDET</variation>
    <location>
        <begin position="71"/>
        <end position="75"/>
    </location>
</feature>
<feature type="sequence conflict" description="In Ref. 2; AA sequence." evidence="12" ref="2">
    <original>KY</original>
    <variation>ZB</variation>
    <location>
        <begin position="77"/>
        <end position="78"/>
    </location>
</feature>
<feature type="sequence conflict" description="In Ref. 4; AA sequence." evidence="12" ref="4">
    <original>YYVD</original>
    <variation>AFAN</variation>
    <location>
        <begin position="78"/>
        <end position="81"/>
    </location>
</feature>
<feature type="sequence conflict" description="In Ref. 5; AA sequence." evidence="12" ref="5">
    <original>YYV</original>
    <variation>FYS</variation>
    <location>
        <begin position="78"/>
        <end position="80"/>
    </location>
</feature>
<feature type="sequence conflict" description="In Ref. 5; AA sequence." evidence="12" ref="5">
    <location>
        <begin position="84"/>
        <end position="85"/>
    </location>
</feature>
<feature type="sequence conflict" description="In Ref. 4; AA sequence." evidence="12" ref="4">
    <original>K</original>
    <variation>N</variation>
    <location>
        <position position="84"/>
    </location>
</feature>
<feature type="sequence conflict" description="In Ref. 5; AA sequence." evidence="12" ref="5">
    <original>I</original>
    <variation>V</variation>
    <location>
        <position position="89"/>
    </location>
</feature>
<feature type="sequence conflict" description="In Ref. 4; AA sequence." evidence="12" ref="4">
    <original>DNA</original>
    <variation>NDS</variation>
    <location>
        <begin position="92"/>
        <end position="94"/>
    </location>
</feature>
<feature type="sequence conflict" description="In Ref. 5; AA sequence." evidence="12" ref="5">
    <original>K</original>
    <variation>R</variation>
    <location>
        <position position="95"/>
    </location>
</feature>
<feature type="sequence conflict" description="In Ref. 4; AA sequence." evidence="12" ref="4">
    <original>S</original>
    <variation>T</variation>
    <location>
        <position position="97"/>
    </location>
</feature>
<feature type="sequence conflict" description="In Ref. 5; AA sequence." evidence="12" ref="5">
    <original>LYLQMNSLRA</original>
    <variation>VSNSMFLQRV</variation>
    <location>
        <begin position="98"/>
        <end position="107"/>
    </location>
</feature>
<feature type="sequence conflict" description="In Ref. 4; AA sequence." evidence="12" ref="4">
    <original>NSLRA</original>
    <variation>ISVTP</variation>
    <location>
        <begin position="103"/>
        <end position="107"/>
    </location>
</feature>
<feature type="sequence conflict" description="In Ref. 2; AA sequence." evidence="12" ref="2">
    <original>A</original>
    <variation>V</variation>
    <location>
        <position position="107"/>
    </location>
</feature>
<feature type="sequence conflict" description="In Ref. 2; AA sequence." evidence="12" ref="2">
    <original>V</original>
    <variation>L</variation>
    <location>
        <position position="112"/>
    </location>
</feature>
<feature type="sequence conflict" description="In Ref. 5; AA sequence." evidence="12" ref="5">
    <original>V</original>
    <variation>T</variation>
    <location>
        <position position="112"/>
    </location>
</feature>
<feature type="non-terminal residue">
    <location>
        <position position="117"/>
    </location>
</feature>
<name>HV307_HUMAN</name>
<sequence length="117" mass="12943">MELGLSWVFLVAILEGVQCEVQLVESGGGLVQPGGSLRLSCAASGFTFSSYWMSWVRQAPGKGLEWVANIKQDGSEKYYVDSVKGRFTISRDNAKNSLYLQMNSLRAEDTAVYYCAR</sequence>
<protein>
    <recommendedName>
        <fullName evidence="6 11">Immunoglobulin heavy variable 3-7</fullName>
    </recommendedName>
    <alternativeName>
        <fullName evidence="14">Ig heavy chain V-III region GAL</fullName>
    </alternativeName>
    <alternativeName>
        <fullName evidence="15">Ig heavy chain V-III region GAR</fullName>
    </alternativeName>
    <alternativeName>
        <fullName evidence="13">Ig heavy chain V-III region JON</fullName>
    </alternativeName>
</protein>
<comment type="function">
    <text evidence="7 8 9 10">V region of the variable domain of immunoglobulin heavy chains that participates in the antigen recognition (PubMed:24600447). Immunoglobulins, also known as antibodies, are membrane-bound or secreted glycoproteins produced by B lymphocytes. In the recognition phase of humoral immunity, the membrane-bound immunoglobulins serve as receptors which, upon binding of a specific antigen, trigger the clonal expansion and differentiation of B lymphocytes into immunoglobulins-secreting plasma cells. Secreted immunoglobulins mediate the effector phase of humoral immunity, which results in the elimination of bound antigens (PubMed:20176268, PubMed:22158414). The antigen binding site is formed by the variable domain of one heavy chain, together with that of its associated light chain. Thus, each immunoglobulin has two antigen binding sites with remarkable affinity for a particular antigen. The variable domains are assembled by a process called V-(D)-J rearrangement and can then be subjected to somatic hypermutations which, after exposure to antigen and selection, allow affinity maturation for a particular antigen (PubMed:17576170, PubMed:20176268).</text>
</comment>
<comment type="subunit">
    <text evidence="8">Immunoglobulins are composed of two identical heavy chains and two identical light chains; disulfide-linked.</text>
</comment>
<comment type="subcellular location">
    <subcellularLocation>
        <location evidence="8 9">Secreted</location>
    </subcellularLocation>
    <subcellularLocation>
        <location evidence="8 9">Cell membrane</location>
    </subcellularLocation>
</comment>
<comment type="polymorphism">
    <text evidence="12">There are several alleles. The sequence shown is that of IMGT allele IGHV3-7*03.</text>
</comment>
<comment type="caution">
    <text evidence="12">For examples of full-length immunoglobulin heavy chains (of different isotypes) see AC P0DOX2, AC P0DOX3, AC P0DOX4, AC P0DOX5 and AC P0DOX6.</text>
</comment>
<evidence type="ECO:0000250" key="1">
    <source>
        <dbReference type="UniProtKB" id="P23083"/>
    </source>
</evidence>
<evidence type="ECO:0000255" key="2">
    <source>
        <dbReference type="PROSITE-ProRule" id="PRU00114"/>
    </source>
</evidence>
<evidence type="ECO:0000269" key="3">
    <source>
    </source>
</evidence>
<evidence type="ECO:0000269" key="4">
    <source>
    </source>
</evidence>
<evidence type="ECO:0000269" key="5">
    <source>
    </source>
</evidence>
<evidence type="ECO:0000303" key="6">
    <source>
    </source>
</evidence>
<evidence type="ECO:0000303" key="7">
    <source>
    </source>
</evidence>
<evidence type="ECO:0000303" key="8">
    <source>
    </source>
</evidence>
<evidence type="ECO:0000303" key="9">
    <source>
    </source>
</evidence>
<evidence type="ECO:0000303" key="10">
    <source>
    </source>
</evidence>
<evidence type="ECO:0000303" key="11">
    <source ref="7"/>
</evidence>
<evidence type="ECO:0000305" key="12"/>
<evidence type="ECO:0000305" key="13">
    <source>
    </source>
</evidence>
<evidence type="ECO:0000305" key="14">
    <source>
    </source>
</evidence>
<evidence type="ECO:0000305" key="15">
    <source>
    </source>
</evidence>
<gene>
    <name evidence="6 11" type="primary">IGHV3-7</name>
</gene>
<dbReference type="EMBL" id="AC244226">
    <property type="status" value="NOT_ANNOTATED_CDS"/>
    <property type="molecule type" value="Genomic_DNA"/>
</dbReference>
<dbReference type="PIR" id="A02063">
    <property type="entry name" value="G3HUJN"/>
</dbReference>
<dbReference type="PIR" id="A02064">
    <property type="entry name" value="M3HUGL"/>
</dbReference>
<dbReference type="PIR" id="S69132">
    <property type="entry name" value="S69132"/>
</dbReference>
<dbReference type="PDB" id="2FL5">
    <property type="method" value="X-ray"/>
    <property type="resolution" value="3.00 A"/>
    <property type="chains" value="B/D/F/H=20-117"/>
</dbReference>
<dbReference type="PDBsum" id="2FL5"/>
<dbReference type="SMR" id="P01780"/>
<dbReference type="FunCoup" id="P01780">
    <property type="interactions" value="444"/>
</dbReference>
<dbReference type="IntAct" id="P01780">
    <property type="interactions" value="1"/>
</dbReference>
<dbReference type="IMGT_GENE-DB" id="IGHV3-7"/>
<dbReference type="BioMuta" id="IGHV3-7"/>
<dbReference type="DMDM" id="123859"/>
<dbReference type="jPOST" id="P01780"/>
<dbReference type="MassIVE" id="P01780"/>
<dbReference type="PRIDE" id="P01780"/>
<dbReference type="Pumba" id="P01780"/>
<dbReference type="Ensembl" id="ENST00000390598.2">
    <property type="protein sequence ID" value="ENSP00000375007.2"/>
    <property type="gene ID" value="ENSG00000211938.2"/>
</dbReference>
<dbReference type="Ensembl" id="ENST00000633988.1">
    <property type="protein sequence ID" value="ENSP00000487659.1"/>
    <property type="gene ID" value="ENSG00000282211.1"/>
</dbReference>
<dbReference type="AGR" id="HGNC:5620"/>
<dbReference type="GeneCards" id="IGHV3-7"/>
<dbReference type="HGNC" id="HGNC:5620">
    <property type="gene designation" value="IGHV3-7"/>
</dbReference>
<dbReference type="HPA" id="ENSG00000211938">
    <property type="expression patterns" value="Tissue enhanced (intestine, lymphoid tissue)"/>
</dbReference>
<dbReference type="neXtProt" id="NX_P01780"/>
<dbReference type="OpenTargets" id="ENSG00000211938"/>
<dbReference type="VEuPathDB" id="HostDB:ENSG00000211938"/>
<dbReference type="GeneTree" id="ENSGT01050000244871"/>
<dbReference type="InParanoid" id="P01780"/>
<dbReference type="OMA" id="CKSTHKS"/>
<dbReference type="OrthoDB" id="9945861at2759"/>
<dbReference type="PAN-GO" id="P01780">
    <property type="GO annotations" value="11 GO annotations based on evolutionary models"/>
</dbReference>
<dbReference type="PhylomeDB" id="P01780"/>
<dbReference type="PathwayCommons" id="P01780"/>
<dbReference type="Reactome" id="R-HSA-166663">
    <property type="pathway name" value="Initial triggering of complement"/>
</dbReference>
<dbReference type="Reactome" id="R-HSA-173623">
    <property type="pathway name" value="Classical antibody-mediated complement activation"/>
</dbReference>
<dbReference type="Reactome" id="R-HSA-198933">
    <property type="pathway name" value="Immunoregulatory interactions between a Lymphoid and a non-Lymphoid cell"/>
</dbReference>
<dbReference type="Reactome" id="R-HSA-202733">
    <property type="pathway name" value="Cell surface interactions at the vascular wall"/>
</dbReference>
<dbReference type="Reactome" id="R-HSA-2029481">
    <property type="pathway name" value="FCGR activation"/>
</dbReference>
<dbReference type="Reactome" id="R-HSA-2029482">
    <property type="pathway name" value="Regulation of actin dynamics for phagocytic cup formation"/>
</dbReference>
<dbReference type="Reactome" id="R-HSA-2029485">
    <property type="pathway name" value="Role of phospholipids in phagocytosis"/>
</dbReference>
<dbReference type="Reactome" id="R-HSA-2168880">
    <property type="pathway name" value="Scavenging of heme from plasma"/>
</dbReference>
<dbReference type="Reactome" id="R-HSA-2454202">
    <property type="pathway name" value="Fc epsilon receptor (FCERI) signaling"/>
</dbReference>
<dbReference type="Reactome" id="R-HSA-2730905">
    <property type="pathway name" value="Role of LAT2/NTAL/LAB on calcium mobilization"/>
</dbReference>
<dbReference type="Reactome" id="R-HSA-2871796">
    <property type="pathway name" value="FCERI mediated MAPK activation"/>
</dbReference>
<dbReference type="Reactome" id="R-HSA-2871809">
    <property type="pathway name" value="FCERI mediated Ca+2 mobilization"/>
</dbReference>
<dbReference type="Reactome" id="R-HSA-2871837">
    <property type="pathway name" value="FCERI mediated NF-kB activation"/>
</dbReference>
<dbReference type="Reactome" id="R-HSA-5690714">
    <property type="pathway name" value="CD22 mediated BCR regulation"/>
</dbReference>
<dbReference type="Reactome" id="R-HSA-9664323">
    <property type="pathway name" value="FCGR3A-mediated IL10 synthesis"/>
</dbReference>
<dbReference type="Reactome" id="R-HSA-9664422">
    <property type="pathway name" value="FCGR3A-mediated phagocytosis"/>
</dbReference>
<dbReference type="Reactome" id="R-HSA-9679191">
    <property type="pathway name" value="Potential therapeutics for SARS"/>
</dbReference>
<dbReference type="Reactome" id="R-HSA-977606">
    <property type="pathway name" value="Regulation of Complement cascade"/>
</dbReference>
<dbReference type="Reactome" id="R-HSA-983695">
    <property type="pathway name" value="Antigen activates B Cell Receptor (BCR) leading to generation of second messengers"/>
</dbReference>
<dbReference type="SignaLink" id="P01780"/>
<dbReference type="ChiTaRS" id="IGHV3-7">
    <property type="organism name" value="human"/>
</dbReference>
<dbReference type="Pharos" id="P01780">
    <property type="development level" value="Tdark"/>
</dbReference>
<dbReference type="PRO" id="PR:P01780"/>
<dbReference type="Proteomes" id="UP000005640">
    <property type="component" value="Chromosome 14"/>
</dbReference>
<dbReference type="RNAct" id="P01780">
    <property type="molecule type" value="protein"/>
</dbReference>
<dbReference type="Bgee" id="ENSG00000211938">
    <property type="expression patterns" value="Expressed in duodenum and 90 other cell types or tissues"/>
</dbReference>
<dbReference type="GO" id="GO:0072562">
    <property type="term" value="C:blood microparticle"/>
    <property type="evidence" value="ECO:0007005"/>
    <property type="project" value="UniProtKB"/>
</dbReference>
<dbReference type="GO" id="GO:0070062">
    <property type="term" value="C:extracellular exosome"/>
    <property type="evidence" value="ECO:0007005"/>
    <property type="project" value="UniProtKB"/>
</dbReference>
<dbReference type="GO" id="GO:0005576">
    <property type="term" value="C:extracellular region"/>
    <property type="evidence" value="ECO:0000304"/>
    <property type="project" value="Reactome"/>
</dbReference>
<dbReference type="GO" id="GO:0019814">
    <property type="term" value="C:immunoglobulin complex"/>
    <property type="evidence" value="ECO:0007669"/>
    <property type="project" value="UniProtKB-KW"/>
</dbReference>
<dbReference type="GO" id="GO:0005886">
    <property type="term" value="C:plasma membrane"/>
    <property type="evidence" value="ECO:0000304"/>
    <property type="project" value="Reactome"/>
</dbReference>
<dbReference type="GO" id="GO:0003823">
    <property type="term" value="F:antigen binding"/>
    <property type="evidence" value="ECO:0000318"/>
    <property type="project" value="GO_Central"/>
</dbReference>
<dbReference type="GO" id="GO:0006955">
    <property type="term" value="P:immune response"/>
    <property type="evidence" value="ECO:0000303"/>
    <property type="project" value="UniProtKB"/>
</dbReference>
<dbReference type="GO" id="GO:0016064">
    <property type="term" value="P:immunoglobulin mediated immune response"/>
    <property type="evidence" value="ECO:0000318"/>
    <property type="project" value="GO_Central"/>
</dbReference>
<dbReference type="CDD" id="cd04981">
    <property type="entry name" value="IgV_H"/>
    <property type="match status" value="1"/>
</dbReference>
<dbReference type="FunFam" id="2.60.40.10:FF:000942">
    <property type="entry name" value="Immunoglobulin heavy variable 3-23"/>
    <property type="match status" value="1"/>
</dbReference>
<dbReference type="Gene3D" id="2.60.40.10">
    <property type="entry name" value="Immunoglobulins"/>
    <property type="match status" value="1"/>
</dbReference>
<dbReference type="InterPro" id="IPR007110">
    <property type="entry name" value="Ig-like_dom"/>
</dbReference>
<dbReference type="InterPro" id="IPR036179">
    <property type="entry name" value="Ig-like_dom_sf"/>
</dbReference>
<dbReference type="InterPro" id="IPR013783">
    <property type="entry name" value="Ig-like_fold"/>
</dbReference>
<dbReference type="InterPro" id="IPR013106">
    <property type="entry name" value="Ig_V-set"/>
</dbReference>
<dbReference type="InterPro" id="IPR050199">
    <property type="entry name" value="IgHV"/>
</dbReference>
<dbReference type="PANTHER" id="PTHR23266">
    <property type="entry name" value="IMMUNOGLOBULIN HEAVY CHAIN"/>
    <property type="match status" value="1"/>
</dbReference>
<dbReference type="Pfam" id="PF07686">
    <property type="entry name" value="V-set"/>
    <property type="match status" value="1"/>
</dbReference>
<dbReference type="SMART" id="SM00406">
    <property type="entry name" value="IGv"/>
    <property type="match status" value="1"/>
</dbReference>
<dbReference type="SUPFAM" id="SSF48726">
    <property type="entry name" value="Immunoglobulin"/>
    <property type="match status" value="1"/>
</dbReference>
<dbReference type="PROSITE" id="PS50835">
    <property type="entry name" value="IG_LIKE"/>
    <property type="match status" value="1"/>
</dbReference>